<feature type="chain" id="PRO_0000071618" description="Carbamoyltransferase HypF">
    <location>
        <begin position="1"/>
        <end position="767"/>
    </location>
</feature>
<feature type="domain" description="Acylphosphatase-like" evidence="3">
    <location>
        <begin position="4"/>
        <end position="90"/>
    </location>
</feature>
<feature type="domain" description="YrdC-like" evidence="2">
    <location>
        <begin position="200"/>
        <end position="385"/>
    </location>
</feature>
<feature type="zinc finger region" description="C4-type" evidence="1">
    <location>
        <begin position="107"/>
        <end position="132"/>
    </location>
</feature>
<feature type="zinc finger region" description="C4-type" evidence="1">
    <location>
        <begin position="157"/>
        <end position="182"/>
    </location>
</feature>
<dbReference type="EC" id="6.2.-.-" evidence="1"/>
<dbReference type="EMBL" id="BA000022">
    <property type="protein sequence ID" value="BAA10154.1"/>
    <property type="molecule type" value="Genomic_DNA"/>
</dbReference>
<dbReference type="PIR" id="S76302">
    <property type="entry name" value="S76302"/>
</dbReference>
<dbReference type="SMR" id="Q55638"/>
<dbReference type="IntAct" id="Q55638">
    <property type="interactions" value="4"/>
</dbReference>
<dbReference type="STRING" id="1148.gene:10499647"/>
<dbReference type="PaxDb" id="1148-1001527"/>
<dbReference type="EnsemblBacteria" id="BAA10154">
    <property type="protein sequence ID" value="BAA10154"/>
    <property type="gene ID" value="BAA10154"/>
</dbReference>
<dbReference type="KEGG" id="syn:sll0322"/>
<dbReference type="eggNOG" id="COG0068">
    <property type="taxonomic scope" value="Bacteria"/>
</dbReference>
<dbReference type="InParanoid" id="Q55638"/>
<dbReference type="PhylomeDB" id="Q55638"/>
<dbReference type="UniPathway" id="UPA00335"/>
<dbReference type="Proteomes" id="UP000001425">
    <property type="component" value="Chromosome"/>
</dbReference>
<dbReference type="GO" id="GO:0016743">
    <property type="term" value="F:carboxyl- or carbamoyltransferase activity"/>
    <property type="evidence" value="ECO:0007669"/>
    <property type="project" value="InterPro"/>
</dbReference>
<dbReference type="GO" id="GO:0003725">
    <property type="term" value="F:double-stranded RNA binding"/>
    <property type="evidence" value="ECO:0007669"/>
    <property type="project" value="InterPro"/>
</dbReference>
<dbReference type="GO" id="GO:0016874">
    <property type="term" value="F:ligase activity"/>
    <property type="evidence" value="ECO:0007669"/>
    <property type="project" value="UniProtKB-KW"/>
</dbReference>
<dbReference type="GO" id="GO:0008270">
    <property type="term" value="F:zinc ion binding"/>
    <property type="evidence" value="ECO:0007669"/>
    <property type="project" value="UniProtKB-KW"/>
</dbReference>
<dbReference type="FunFam" id="3.30.420.40:FF:000124">
    <property type="entry name" value="Carbamoyltransferase HypF"/>
    <property type="match status" value="1"/>
</dbReference>
<dbReference type="Gene3D" id="3.30.110.120">
    <property type="match status" value="1"/>
</dbReference>
<dbReference type="Gene3D" id="3.30.420.360">
    <property type="match status" value="1"/>
</dbReference>
<dbReference type="Gene3D" id="3.30.420.40">
    <property type="match status" value="1"/>
</dbReference>
<dbReference type="Gene3D" id="3.90.870.50">
    <property type="match status" value="1"/>
</dbReference>
<dbReference type="InterPro" id="IPR001792">
    <property type="entry name" value="Acylphosphatase-like_dom"/>
</dbReference>
<dbReference type="InterPro" id="IPR036046">
    <property type="entry name" value="Acylphosphatase-like_dom_sf"/>
</dbReference>
<dbReference type="InterPro" id="IPR017968">
    <property type="entry name" value="Acylphosphatase_CS"/>
</dbReference>
<dbReference type="InterPro" id="IPR051060">
    <property type="entry name" value="Carbamoyltrans_HypF-like"/>
</dbReference>
<dbReference type="InterPro" id="IPR004421">
    <property type="entry name" value="Carbamoyltransferase_HypF"/>
</dbReference>
<dbReference type="InterPro" id="IPR017945">
    <property type="entry name" value="DHBP_synth_RibB-like_a/b_dom"/>
</dbReference>
<dbReference type="InterPro" id="IPR041440">
    <property type="entry name" value="HypF_C"/>
</dbReference>
<dbReference type="InterPro" id="IPR055128">
    <property type="entry name" value="HypF_C_2"/>
</dbReference>
<dbReference type="InterPro" id="IPR006070">
    <property type="entry name" value="Sua5-like_dom"/>
</dbReference>
<dbReference type="InterPro" id="IPR011125">
    <property type="entry name" value="Znf_HypF"/>
</dbReference>
<dbReference type="NCBIfam" id="TIGR00143">
    <property type="entry name" value="hypF"/>
    <property type="match status" value="1"/>
</dbReference>
<dbReference type="PANTHER" id="PTHR42959">
    <property type="entry name" value="CARBAMOYLTRANSFERASE"/>
    <property type="match status" value="1"/>
</dbReference>
<dbReference type="PANTHER" id="PTHR42959:SF1">
    <property type="entry name" value="CARBAMOYLTRANSFERASE HYPF"/>
    <property type="match status" value="1"/>
</dbReference>
<dbReference type="Pfam" id="PF00708">
    <property type="entry name" value="Acylphosphatase"/>
    <property type="match status" value="1"/>
</dbReference>
<dbReference type="Pfam" id="PF17788">
    <property type="entry name" value="HypF_C"/>
    <property type="match status" value="1"/>
</dbReference>
<dbReference type="Pfam" id="PF22521">
    <property type="entry name" value="HypF_C_2"/>
    <property type="match status" value="1"/>
</dbReference>
<dbReference type="Pfam" id="PF01300">
    <property type="entry name" value="Sua5_yciO_yrdC"/>
    <property type="match status" value="1"/>
</dbReference>
<dbReference type="Pfam" id="PF07503">
    <property type="entry name" value="zf-HYPF"/>
    <property type="match status" value="2"/>
</dbReference>
<dbReference type="PIRSF" id="PIRSF006256">
    <property type="entry name" value="CMPcnvr_hdrg_mat"/>
    <property type="match status" value="1"/>
</dbReference>
<dbReference type="SUPFAM" id="SSF54975">
    <property type="entry name" value="Acylphosphatase/BLUF domain-like"/>
    <property type="match status" value="1"/>
</dbReference>
<dbReference type="SUPFAM" id="SSF55821">
    <property type="entry name" value="YrdC/RibB"/>
    <property type="match status" value="1"/>
</dbReference>
<dbReference type="PROSITE" id="PS00150">
    <property type="entry name" value="ACYLPHOSPHATASE_1"/>
    <property type="match status" value="1"/>
</dbReference>
<dbReference type="PROSITE" id="PS51160">
    <property type="entry name" value="ACYLPHOSPHATASE_3"/>
    <property type="match status" value="1"/>
</dbReference>
<dbReference type="PROSITE" id="PS51163">
    <property type="entry name" value="YRDC"/>
    <property type="match status" value="1"/>
</dbReference>
<reference key="1">
    <citation type="journal article" date="1995" name="DNA Res.">
        <title>Sequence analysis of the genome of the unicellular cyanobacterium Synechocystis sp. strain PCC6803. I. Sequence features in the 1 Mb region from map positions 64% to 92% of the genome.</title>
        <authorList>
            <person name="Kaneko T."/>
            <person name="Tanaka A."/>
            <person name="Sato S."/>
            <person name="Kotani H."/>
            <person name="Sazuka T."/>
            <person name="Miyajima N."/>
            <person name="Sugiura M."/>
            <person name="Tabata S."/>
        </authorList>
    </citation>
    <scope>NUCLEOTIDE SEQUENCE [LARGE SCALE GENOMIC DNA]</scope>
    <source>
        <strain>ATCC 27184 / PCC 6803 / N-1</strain>
    </source>
</reference>
<reference key="2">
    <citation type="journal article" date="1996" name="DNA Res.">
        <title>Sequence analysis of the genome of the unicellular cyanobacterium Synechocystis sp. strain PCC6803. II. Sequence determination of the entire genome and assignment of potential protein-coding regions.</title>
        <authorList>
            <person name="Kaneko T."/>
            <person name="Sato S."/>
            <person name="Kotani H."/>
            <person name="Tanaka A."/>
            <person name="Asamizu E."/>
            <person name="Nakamura Y."/>
            <person name="Miyajima N."/>
            <person name="Hirosawa M."/>
            <person name="Sugiura M."/>
            <person name="Sasamoto S."/>
            <person name="Kimura T."/>
            <person name="Hosouchi T."/>
            <person name="Matsuno A."/>
            <person name="Muraki A."/>
            <person name="Nakazaki N."/>
            <person name="Naruo K."/>
            <person name="Okumura S."/>
            <person name="Shimpo S."/>
            <person name="Takeuchi C."/>
            <person name="Wada T."/>
            <person name="Watanabe A."/>
            <person name="Yamada M."/>
            <person name="Yasuda M."/>
            <person name="Tabata S."/>
        </authorList>
    </citation>
    <scope>NUCLEOTIDE SEQUENCE [LARGE SCALE GENOMIC DNA]</scope>
    <source>
        <strain>ATCC 27184 / PCC 6803 / Kazusa</strain>
    </source>
</reference>
<accession>Q55638</accession>
<sequence>MLKTVAIQVQGRVQGVGFRPFVYTLAQEMGLNGWVNNSTQGATVVITADEKAIADFTERLTKTLPPPGLIEQLAVEQLPLESFTNFTIRPSSDGPKTASILPDLSTCSACLTELFDPSDRRYLYPFINCTHCGPRYTIIEALPYDRCRTTMARFRQCTDCEREYKQPGDRRFHAQPNACPRCGPQLAFWNRQGQVIAEANEALNFAVDNLKVGNIIAIKGLGGFHLCCDATDFEAVEKLRLRKHRPDKPLAVMYGNLGQIVEHYQPNNLEVELLQSAAAPIVLLNKKKQLILVENIAPGNPRVGVMLAYTPLHHLLLKKLKKPMVATSGNLAGEQICIDNIDALTRLQNIADGFLVHDRPIVCPVDDSVVQIVAGKPLFLRRARGYAPQPITLPKPTQKKLLAMGGHYKNTVAIAKQNQAYVSQHLGDLNSAPTYQNFEEAIAHLSQLYDFSPQEIVADLHPDYFSHQYAENQALPVTFVQHHYAHILAVMAEHGVMEESVLGIAWDGTGYGMDGTIWGGEFLKITQGTWQRIAHLQPFHLLGNQQAIKYPHRIALALLWPTFGDDFSADSLGNWLNFNNGFKNKINSRLNQDLNNKNLRQLWQRGQAPLTSSMGRLFDGIATLIGLINEVTFEGQAAIALEAQIMPNLTEEYYPLTLNNKEKKLAVDWRPLIKAITTEDRSKTNLIATKFHNSLVNLIITIAQQQGIEKVALGGGCFQNCYLLASTITALKKAGFSPLWPRELPPNDGAICMGQLLAKIQARQYIC</sequence>
<keyword id="KW-0436">Ligase</keyword>
<keyword id="KW-0479">Metal-binding</keyword>
<keyword id="KW-1185">Reference proteome</keyword>
<keyword id="KW-0862">Zinc</keyword>
<keyword id="KW-0863">Zinc-finger</keyword>
<proteinExistence type="inferred from homology"/>
<evidence type="ECO:0000250" key="1">
    <source>
        <dbReference type="UniProtKB" id="P30131"/>
    </source>
</evidence>
<evidence type="ECO:0000255" key="2">
    <source>
        <dbReference type="PROSITE-ProRule" id="PRU00518"/>
    </source>
</evidence>
<evidence type="ECO:0000255" key="3">
    <source>
        <dbReference type="PROSITE-ProRule" id="PRU00520"/>
    </source>
</evidence>
<evidence type="ECO:0000305" key="4"/>
<comment type="function">
    <text evidence="1">Involved in the maturation of [NiFe] hydrogenases. Along with HypE, it catalyzes the synthesis of the CN ligands of the active site iron of [NiFe]-hydrogenases. HypF functions as a carbamoyl transferase using carbamoylphosphate as a substrate and transferring the carboxamido moiety in an ATP-dependent reaction to the thiolate of the C-terminal cysteine of HypE yielding a protein-S-carboxamide.</text>
</comment>
<comment type="catalytic activity">
    <reaction evidence="1">
        <text>C-terminal L-cysteinyl-[HypE protein] + carbamoyl phosphate + ATP + H2O = C-terminal S-carboxamide-L-cysteinyl-[HypE protein] + AMP + phosphate + diphosphate + H(+)</text>
        <dbReference type="Rhea" id="RHEA:55636"/>
        <dbReference type="Rhea" id="RHEA-COMP:14247"/>
        <dbReference type="Rhea" id="RHEA-COMP:14392"/>
        <dbReference type="ChEBI" id="CHEBI:15377"/>
        <dbReference type="ChEBI" id="CHEBI:15378"/>
        <dbReference type="ChEBI" id="CHEBI:30616"/>
        <dbReference type="ChEBI" id="CHEBI:33019"/>
        <dbReference type="ChEBI" id="CHEBI:43474"/>
        <dbReference type="ChEBI" id="CHEBI:58228"/>
        <dbReference type="ChEBI" id="CHEBI:76913"/>
        <dbReference type="ChEBI" id="CHEBI:139126"/>
        <dbReference type="ChEBI" id="CHEBI:456215"/>
    </reaction>
</comment>
<comment type="pathway">
    <text evidence="1">Protein modification; [NiFe] hydrogenase maturation.</text>
</comment>
<comment type="similarity">
    <text evidence="4">Belongs to the carbamoyltransferase HypF family.</text>
</comment>
<organism>
    <name type="scientific">Synechocystis sp. (strain ATCC 27184 / PCC 6803 / Kazusa)</name>
    <dbReference type="NCBI Taxonomy" id="1111708"/>
    <lineage>
        <taxon>Bacteria</taxon>
        <taxon>Bacillati</taxon>
        <taxon>Cyanobacteriota</taxon>
        <taxon>Cyanophyceae</taxon>
        <taxon>Synechococcales</taxon>
        <taxon>Merismopediaceae</taxon>
        <taxon>Synechocystis</taxon>
    </lineage>
</organism>
<gene>
    <name type="primary">hypF</name>
    <name type="ordered locus">sll0322</name>
</gene>
<name>HYPF_SYNY3</name>
<protein>
    <recommendedName>
        <fullName evidence="1">Carbamoyltransferase HypF</fullName>
        <ecNumber evidence="1">6.2.-.-</ecNumber>
    </recommendedName>
    <alternativeName>
        <fullName>Carbamoyl phosphate-converting enzyme HypF</fullName>
    </alternativeName>
    <alternativeName>
        <fullName>[NiFe]-hydrogenase maturation factor HypF</fullName>
        <shortName>Hydrogenase maturation protein HypF</shortName>
    </alternativeName>
</protein>